<name>PLSX_XANP2</name>
<keyword id="KW-0963">Cytoplasm</keyword>
<keyword id="KW-0444">Lipid biosynthesis</keyword>
<keyword id="KW-0443">Lipid metabolism</keyword>
<keyword id="KW-0594">Phospholipid biosynthesis</keyword>
<keyword id="KW-1208">Phospholipid metabolism</keyword>
<keyword id="KW-1185">Reference proteome</keyword>
<keyword id="KW-0808">Transferase</keyword>
<reference key="1">
    <citation type="submission" date="2007-07" db="EMBL/GenBank/DDBJ databases">
        <title>Complete sequence of chromosome of Xanthobacter autotrophicus Py2.</title>
        <authorList>
            <consortium name="US DOE Joint Genome Institute"/>
            <person name="Copeland A."/>
            <person name="Lucas S."/>
            <person name="Lapidus A."/>
            <person name="Barry K."/>
            <person name="Glavina del Rio T."/>
            <person name="Hammon N."/>
            <person name="Israni S."/>
            <person name="Dalin E."/>
            <person name="Tice H."/>
            <person name="Pitluck S."/>
            <person name="Sims D."/>
            <person name="Brettin T."/>
            <person name="Bruce D."/>
            <person name="Detter J.C."/>
            <person name="Han C."/>
            <person name="Tapia R."/>
            <person name="Brainard J."/>
            <person name="Schmutz J."/>
            <person name="Larimer F."/>
            <person name="Land M."/>
            <person name="Hauser L."/>
            <person name="Kyrpides N."/>
            <person name="Kim E."/>
            <person name="Ensigns S.A."/>
            <person name="Richardson P."/>
        </authorList>
    </citation>
    <scope>NUCLEOTIDE SEQUENCE [LARGE SCALE GENOMIC DNA]</scope>
    <source>
        <strain>ATCC BAA-1158 / Py2</strain>
    </source>
</reference>
<comment type="function">
    <text evidence="1">Catalyzes the reversible formation of acyl-phosphate (acyl-PO(4)) from acyl-[acyl-carrier-protein] (acyl-ACP). This enzyme utilizes acyl-ACP as fatty acyl donor, but not acyl-CoA.</text>
</comment>
<comment type="catalytic activity">
    <reaction evidence="1">
        <text>a fatty acyl-[ACP] + phosphate = an acyl phosphate + holo-[ACP]</text>
        <dbReference type="Rhea" id="RHEA:42292"/>
        <dbReference type="Rhea" id="RHEA-COMP:9685"/>
        <dbReference type="Rhea" id="RHEA-COMP:14125"/>
        <dbReference type="ChEBI" id="CHEBI:43474"/>
        <dbReference type="ChEBI" id="CHEBI:59918"/>
        <dbReference type="ChEBI" id="CHEBI:64479"/>
        <dbReference type="ChEBI" id="CHEBI:138651"/>
        <dbReference type="EC" id="2.3.1.274"/>
    </reaction>
</comment>
<comment type="pathway">
    <text evidence="1">Lipid metabolism; phospholipid metabolism.</text>
</comment>
<comment type="subunit">
    <text evidence="1">Homodimer. Probably interacts with PlsY.</text>
</comment>
<comment type="subcellular location">
    <subcellularLocation>
        <location evidence="1">Cytoplasm</location>
    </subcellularLocation>
    <text evidence="1">Associated with the membrane possibly through PlsY.</text>
</comment>
<comment type="similarity">
    <text evidence="1">Belongs to the PlsX family.</text>
</comment>
<organism>
    <name type="scientific">Xanthobacter autotrophicus (strain ATCC BAA-1158 / Py2)</name>
    <dbReference type="NCBI Taxonomy" id="78245"/>
    <lineage>
        <taxon>Bacteria</taxon>
        <taxon>Pseudomonadati</taxon>
        <taxon>Pseudomonadota</taxon>
        <taxon>Alphaproteobacteria</taxon>
        <taxon>Hyphomicrobiales</taxon>
        <taxon>Xanthobacteraceae</taxon>
        <taxon>Xanthobacter</taxon>
    </lineage>
</organism>
<proteinExistence type="inferred from homology"/>
<sequence>MTAPVRIALDAMGGDHGPETVLAGAEISLWRHPDTSFVLYGDEARVTEVLKSHPKLAAVSRIVHTDVVVGMDDKPSQALRRGRYKSSMWRAIDAVKLKEADVAVSAGNTGALMAMANFNLRTMPGISRPAIAAIWPTLRGESVVLDVGASIGATAKSLVEMAIMGSAMARVLFDLEAPTVGLLNVGVEEIKGVEEVKEAARILREENLDVNYRGFVEGNDIGAGTVDVVVTEGFSGNIALKTAEGTAKQLGSYLRAAMGRTWRARIGYLLARDAFRVLREKMDPRRANGGVFLGLNGIVIKSHGGTDAEGFAAAVDLAYDMVRNELLARIEKSLVGRQPPDVAACRPQAAGVEGQS</sequence>
<evidence type="ECO:0000255" key="1">
    <source>
        <dbReference type="HAMAP-Rule" id="MF_00019"/>
    </source>
</evidence>
<protein>
    <recommendedName>
        <fullName evidence="1">Phosphate acyltransferase</fullName>
        <ecNumber evidence="1">2.3.1.274</ecNumber>
    </recommendedName>
    <alternativeName>
        <fullName evidence="1">Acyl-ACP phosphotransacylase</fullName>
    </alternativeName>
    <alternativeName>
        <fullName evidence="1">Acyl-[acyl-carrier-protein]--phosphate acyltransferase</fullName>
    </alternativeName>
    <alternativeName>
        <fullName evidence="1">Phosphate-acyl-ACP acyltransferase</fullName>
    </alternativeName>
</protein>
<gene>
    <name evidence="1" type="primary">plsX</name>
    <name type="ordered locus">Xaut_4384</name>
</gene>
<dbReference type="EC" id="2.3.1.274" evidence="1"/>
<dbReference type="EMBL" id="CP000781">
    <property type="protein sequence ID" value="ABS69605.1"/>
    <property type="molecule type" value="Genomic_DNA"/>
</dbReference>
<dbReference type="SMR" id="A7INL1"/>
<dbReference type="STRING" id="78245.Xaut_4384"/>
<dbReference type="KEGG" id="xau:Xaut_4384"/>
<dbReference type="eggNOG" id="COG0416">
    <property type="taxonomic scope" value="Bacteria"/>
</dbReference>
<dbReference type="HOGENOM" id="CLU_039379_1_0_5"/>
<dbReference type="OrthoDB" id="9806408at2"/>
<dbReference type="PhylomeDB" id="A7INL1"/>
<dbReference type="UniPathway" id="UPA00085"/>
<dbReference type="Proteomes" id="UP000002417">
    <property type="component" value="Chromosome"/>
</dbReference>
<dbReference type="GO" id="GO:0005737">
    <property type="term" value="C:cytoplasm"/>
    <property type="evidence" value="ECO:0007669"/>
    <property type="project" value="UniProtKB-SubCell"/>
</dbReference>
<dbReference type="GO" id="GO:0043811">
    <property type="term" value="F:phosphate:acyl-[acyl carrier protein] acyltransferase activity"/>
    <property type="evidence" value="ECO:0007669"/>
    <property type="project" value="UniProtKB-UniRule"/>
</dbReference>
<dbReference type="GO" id="GO:0006633">
    <property type="term" value="P:fatty acid biosynthetic process"/>
    <property type="evidence" value="ECO:0007669"/>
    <property type="project" value="UniProtKB-UniRule"/>
</dbReference>
<dbReference type="GO" id="GO:0008654">
    <property type="term" value="P:phospholipid biosynthetic process"/>
    <property type="evidence" value="ECO:0007669"/>
    <property type="project" value="UniProtKB-KW"/>
</dbReference>
<dbReference type="Gene3D" id="3.40.718.10">
    <property type="entry name" value="Isopropylmalate Dehydrogenase"/>
    <property type="match status" value="1"/>
</dbReference>
<dbReference type="HAMAP" id="MF_00019">
    <property type="entry name" value="PlsX"/>
    <property type="match status" value="1"/>
</dbReference>
<dbReference type="InterPro" id="IPR003664">
    <property type="entry name" value="FA_synthesis"/>
</dbReference>
<dbReference type="InterPro" id="IPR012281">
    <property type="entry name" value="Phospholipid_synth_PlsX-like"/>
</dbReference>
<dbReference type="NCBIfam" id="TIGR00182">
    <property type="entry name" value="plsX"/>
    <property type="match status" value="1"/>
</dbReference>
<dbReference type="PANTHER" id="PTHR30100">
    <property type="entry name" value="FATTY ACID/PHOSPHOLIPID SYNTHESIS PROTEIN PLSX"/>
    <property type="match status" value="1"/>
</dbReference>
<dbReference type="PANTHER" id="PTHR30100:SF1">
    <property type="entry name" value="PHOSPHATE ACYLTRANSFERASE"/>
    <property type="match status" value="1"/>
</dbReference>
<dbReference type="Pfam" id="PF02504">
    <property type="entry name" value="FA_synthesis"/>
    <property type="match status" value="1"/>
</dbReference>
<dbReference type="PIRSF" id="PIRSF002465">
    <property type="entry name" value="Phsphlp_syn_PlsX"/>
    <property type="match status" value="1"/>
</dbReference>
<dbReference type="SUPFAM" id="SSF53659">
    <property type="entry name" value="Isocitrate/Isopropylmalate dehydrogenase-like"/>
    <property type="match status" value="1"/>
</dbReference>
<feature type="chain" id="PRO_1000089951" description="Phosphate acyltransferase">
    <location>
        <begin position="1"/>
        <end position="356"/>
    </location>
</feature>
<accession>A7INL1</accession>